<reference key="1">
    <citation type="journal article" date="2007" name="Environ. Microbiol.">
        <title>Whole-genome analysis of the ammonia-oxidizing bacterium, Nitrosomonas eutropha C91: implications for niche adaptation.</title>
        <authorList>
            <person name="Stein L.Y."/>
            <person name="Arp D.J."/>
            <person name="Berube P.M."/>
            <person name="Chain P.S."/>
            <person name="Hauser L."/>
            <person name="Jetten M.S."/>
            <person name="Klotz M.G."/>
            <person name="Larimer F.W."/>
            <person name="Norton J.M."/>
            <person name="Op den Camp H.J.M."/>
            <person name="Shin M."/>
            <person name="Wei X."/>
        </authorList>
    </citation>
    <scope>NUCLEOTIDE SEQUENCE [LARGE SCALE GENOMIC DNA]</scope>
    <source>
        <strain>DSM 101675 / C91 / Nm57</strain>
    </source>
</reference>
<dbReference type="EC" id="2.3.1.47" evidence="1"/>
<dbReference type="EMBL" id="CP000450">
    <property type="protein sequence ID" value="ABI60359.1"/>
    <property type="molecule type" value="Genomic_DNA"/>
</dbReference>
<dbReference type="RefSeq" id="WP_011635156.1">
    <property type="nucleotide sequence ID" value="NC_008344.1"/>
</dbReference>
<dbReference type="SMR" id="Q0AE73"/>
<dbReference type="STRING" id="335283.Neut_2137"/>
<dbReference type="KEGG" id="net:Neut_2137"/>
<dbReference type="eggNOG" id="COG0156">
    <property type="taxonomic scope" value="Bacteria"/>
</dbReference>
<dbReference type="HOGENOM" id="CLU_015846_11_2_4"/>
<dbReference type="OrthoDB" id="9807157at2"/>
<dbReference type="UniPathway" id="UPA00078"/>
<dbReference type="Proteomes" id="UP000001966">
    <property type="component" value="Chromosome"/>
</dbReference>
<dbReference type="GO" id="GO:0008710">
    <property type="term" value="F:8-amino-7-oxononanoate synthase activity"/>
    <property type="evidence" value="ECO:0007669"/>
    <property type="project" value="UniProtKB-UniRule"/>
</dbReference>
<dbReference type="GO" id="GO:0030170">
    <property type="term" value="F:pyridoxal phosphate binding"/>
    <property type="evidence" value="ECO:0007669"/>
    <property type="project" value="UniProtKB-UniRule"/>
</dbReference>
<dbReference type="GO" id="GO:0009102">
    <property type="term" value="P:biotin biosynthetic process"/>
    <property type="evidence" value="ECO:0007669"/>
    <property type="project" value="UniProtKB-UniRule"/>
</dbReference>
<dbReference type="CDD" id="cd06454">
    <property type="entry name" value="KBL_like"/>
    <property type="match status" value="1"/>
</dbReference>
<dbReference type="Gene3D" id="3.90.1150.10">
    <property type="entry name" value="Aspartate Aminotransferase, domain 1"/>
    <property type="match status" value="1"/>
</dbReference>
<dbReference type="Gene3D" id="3.40.640.10">
    <property type="entry name" value="Type I PLP-dependent aspartate aminotransferase-like (Major domain)"/>
    <property type="match status" value="1"/>
</dbReference>
<dbReference type="HAMAP" id="MF_01693">
    <property type="entry name" value="BioF_aminotrans_2"/>
    <property type="match status" value="1"/>
</dbReference>
<dbReference type="InterPro" id="IPR004839">
    <property type="entry name" value="Aminotransferase_I/II_large"/>
</dbReference>
<dbReference type="InterPro" id="IPR050087">
    <property type="entry name" value="AON_synthase_class-II"/>
</dbReference>
<dbReference type="InterPro" id="IPR004723">
    <property type="entry name" value="AONS_Archaea/Proteobacteria"/>
</dbReference>
<dbReference type="InterPro" id="IPR022834">
    <property type="entry name" value="AONS_Proteobacteria"/>
</dbReference>
<dbReference type="InterPro" id="IPR015424">
    <property type="entry name" value="PyrdxlP-dep_Trfase"/>
</dbReference>
<dbReference type="InterPro" id="IPR015421">
    <property type="entry name" value="PyrdxlP-dep_Trfase_major"/>
</dbReference>
<dbReference type="InterPro" id="IPR015422">
    <property type="entry name" value="PyrdxlP-dep_Trfase_small"/>
</dbReference>
<dbReference type="NCBIfam" id="TIGR00858">
    <property type="entry name" value="bioF"/>
    <property type="match status" value="1"/>
</dbReference>
<dbReference type="PANTHER" id="PTHR13693:SF100">
    <property type="entry name" value="8-AMINO-7-OXONONANOATE SYNTHASE"/>
    <property type="match status" value="1"/>
</dbReference>
<dbReference type="PANTHER" id="PTHR13693">
    <property type="entry name" value="CLASS II AMINOTRANSFERASE/8-AMINO-7-OXONONANOATE SYNTHASE"/>
    <property type="match status" value="1"/>
</dbReference>
<dbReference type="Pfam" id="PF00155">
    <property type="entry name" value="Aminotran_1_2"/>
    <property type="match status" value="1"/>
</dbReference>
<dbReference type="SUPFAM" id="SSF53383">
    <property type="entry name" value="PLP-dependent transferases"/>
    <property type="match status" value="1"/>
</dbReference>
<accession>Q0AE73</accession>
<evidence type="ECO:0000255" key="1">
    <source>
        <dbReference type="HAMAP-Rule" id="MF_01693"/>
    </source>
</evidence>
<sequence>MLPDLAEALQQRRQEGLYRFRQVLEGPQSPRVTIDGRDFLAFCSNDYLGLANHPALIEAVAAGAQRYGVGSGASHLISGHSRAHHELEEALAEFVGLPRTLLFSTGYMANMAVVTALMGREDAIFADRLNHASLNDAALLSRARFIRYPHLDLVTLEKQLKTIQARRRLIVTDAVFSMDGDRAPVAELLALCQRFDAWLLLDDAHGFGVLGEQGKGSLYDPQEVERNVPHLIYMATLGKAAGVSGAFVAAQASMIETLIQHSRTYGYTTAAAPLLAHALLTSLQLISQGVWRRERLVQLIEQLRQKLQSLPWQLLLSDTPIQPLLVGGSREAVRLDQALRERGIWVPAIRPPTVPQGMARLRISLSAAHAGEDVDQLSAALHDLAGC</sequence>
<protein>
    <recommendedName>
        <fullName evidence="1">8-amino-7-oxononanoate synthase</fullName>
        <shortName evidence="1">AONS</shortName>
        <ecNumber evidence="1">2.3.1.47</ecNumber>
    </recommendedName>
    <alternativeName>
        <fullName evidence="1">7-keto-8-amino-pelargonic acid synthase</fullName>
        <shortName evidence="1">7-KAP synthase</shortName>
        <shortName evidence="1">KAPA synthase</shortName>
    </alternativeName>
    <alternativeName>
        <fullName evidence="1">8-amino-7-ketopelargonate synthase</fullName>
    </alternativeName>
</protein>
<keyword id="KW-0093">Biotin biosynthesis</keyword>
<keyword id="KW-0663">Pyridoxal phosphate</keyword>
<keyword id="KW-0808">Transferase</keyword>
<comment type="function">
    <text evidence="1">Catalyzes the decarboxylative condensation of pimeloyl-[acyl-carrier protein] and L-alanine to produce 8-amino-7-oxononanoate (AON), [acyl-carrier protein], and carbon dioxide.</text>
</comment>
<comment type="catalytic activity">
    <reaction evidence="1">
        <text>6-carboxyhexanoyl-[ACP] + L-alanine + H(+) = (8S)-8-amino-7-oxononanoate + holo-[ACP] + CO2</text>
        <dbReference type="Rhea" id="RHEA:42288"/>
        <dbReference type="Rhea" id="RHEA-COMP:9685"/>
        <dbReference type="Rhea" id="RHEA-COMP:9955"/>
        <dbReference type="ChEBI" id="CHEBI:15378"/>
        <dbReference type="ChEBI" id="CHEBI:16526"/>
        <dbReference type="ChEBI" id="CHEBI:57972"/>
        <dbReference type="ChEBI" id="CHEBI:64479"/>
        <dbReference type="ChEBI" id="CHEBI:78846"/>
        <dbReference type="ChEBI" id="CHEBI:149468"/>
        <dbReference type="EC" id="2.3.1.47"/>
    </reaction>
</comment>
<comment type="cofactor">
    <cofactor evidence="1">
        <name>pyridoxal 5'-phosphate</name>
        <dbReference type="ChEBI" id="CHEBI:597326"/>
    </cofactor>
</comment>
<comment type="pathway">
    <text evidence="1">Cofactor biosynthesis; biotin biosynthesis.</text>
</comment>
<comment type="subunit">
    <text evidence="1">Homodimer.</text>
</comment>
<comment type="similarity">
    <text evidence="1">Belongs to the class-II pyridoxal-phosphate-dependent aminotransferase family. BioF subfamily.</text>
</comment>
<organism>
    <name type="scientific">Nitrosomonas eutropha (strain DSM 101675 / C91 / Nm57)</name>
    <dbReference type="NCBI Taxonomy" id="335283"/>
    <lineage>
        <taxon>Bacteria</taxon>
        <taxon>Pseudomonadati</taxon>
        <taxon>Pseudomonadota</taxon>
        <taxon>Betaproteobacteria</taxon>
        <taxon>Nitrosomonadales</taxon>
        <taxon>Nitrosomonadaceae</taxon>
        <taxon>Nitrosomonas</taxon>
    </lineage>
</organism>
<feature type="chain" id="PRO_0000381054" description="8-amino-7-oxononanoate synthase">
    <location>
        <begin position="1"/>
        <end position="387"/>
    </location>
</feature>
<feature type="binding site" evidence="1">
    <location>
        <position position="19"/>
    </location>
    <ligand>
        <name>substrate</name>
    </ligand>
</feature>
<feature type="binding site" evidence="1">
    <location>
        <begin position="106"/>
        <end position="107"/>
    </location>
    <ligand>
        <name>pyridoxal 5'-phosphate</name>
        <dbReference type="ChEBI" id="CHEBI:597326"/>
    </ligand>
</feature>
<feature type="binding site" evidence="1">
    <location>
        <position position="131"/>
    </location>
    <ligand>
        <name>substrate</name>
    </ligand>
</feature>
<feature type="binding site" evidence="1">
    <location>
        <position position="177"/>
    </location>
    <ligand>
        <name>pyridoxal 5'-phosphate</name>
        <dbReference type="ChEBI" id="CHEBI:597326"/>
    </ligand>
</feature>
<feature type="binding site" evidence="1">
    <location>
        <position position="205"/>
    </location>
    <ligand>
        <name>pyridoxal 5'-phosphate</name>
        <dbReference type="ChEBI" id="CHEBI:597326"/>
    </ligand>
</feature>
<feature type="binding site" evidence="1">
    <location>
        <position position="236"/>
    </location>
    <ligand>
        <name>pyridoxal 5'-phosphate</name>
        <dbReference type="ChEBI" id="CHEBI:597326"/>
    </ligand>
</feature>
<feature type="binding site" evidence="1">
    <location>
        <position position="353"/>
    </location>
    <ligand>
        <name>substrate</name>
    </ligand>
</feature>
<feature type="modified residue" description="N6-(pyridoxal phosphate)lysine" evidence="1">
    <location>
        <position position="239"/>
    </location>
</feature>
<gene>
    <name evidence="1" type="primary">bioF</name>
    <name type="ordered locus">Neut_2137</name>
</gene>
<proteinExistence type="inferred from homology"/>
<name>BIOF_NITEC</name>